<comment type="catalytic activity">
    <reaction evidence="1">
        <text>2 reduced [2Fe-2S]-[ferredoxin] + NADP(+) + H(+) = 2 oxidized [2Fe-2S]-[ferredoxin] + NADPH</text>
        <dbReference type="Rhea" id="RHEA:20125"/>
        <dbReference type="Rhea" id="RHEA-COMP:10000"/>
        <dbReference type="Rhea" id="RHEA-COMP:10001"/>
        <dbReference type="ChEBI" id="CHEBI:15378"/>
        <dbReference type="ChEBI" id="CHEBI:33737"/>
        <dbReference type="ChEBI" id="CHEBI:33738"/>
        <dbReference type="ChEBI" id="CHEBI:57783"/>
        <dbReference type="ChEBI" id="CHEBI:58349"/>
        <dbReference type="EC" id="1.18.1.2"/>
    </reaction>
</comment>
<comment type="cofactor">
    <cofactor evidence="1">
        <name>FAD</name>
        <dbReference type="ChEBI" id="CHEBI:57692"/>
    </cofactor>
    <text evidence="1">Binds 1 FAD per subunit.</text>
</comment>
<comment type="subunit">
    <text evidence="1">Homodimer.</text>
</comment>
<comment type="similarity">
    <text evidence="1">Belongs to the ferredoxin--NADP reductase type 2 family.</text>
</comment>
<proteinExistence type="inferred from homology"/>
<accession>A5CF57</accession>
<reference key="1">
    <citation type="journal article" date="2007" name="Proc. Natl. Acad. Sci. U.S.A.">
        <title>The Orientia tsutsugamushi genome reveals massive proliferation of conjugative type IV secretion system and host-cell interaction genes.</title>
        <authorList>
            <person name="Cho N.-H."/>
            <person name="Kim H.-R."/>
            <person name="Lee J.-H."/>
            <person name="Kim S.-Y."/>
            <person name="Kim J."/>
            <person name="Cha S."/>
            <person name="Kim S.-Y."/>
            <person name="Darby A.C."/>
            <person name="Fuxelius H.-H."/>
            <person name="Yin J."/>
            <person name="Kim J.H."/>
            <person name="Kim J."/>
            <person name="Lee S.J."/>
            <person name="Koh Y.-S."/>
            <person name="Jang W.-J."/>
            <person name="Park K.-H."/>
            <person name="Andersson S.G.E."/>
            <person name="Choi M.-S."/>
            <person name="Kim I.-S."/>
        </authorList>
    </citation>
    <scope>NUCLEOTIDE SEQUENCE [LARGE SCALE GENOMIC DNA]</scope>
    <source>
        <strain>Boryong</strain>
    </source>
</reference>
<organism>
    <name type="scientific">Orientia tsutsugamushi (strain Boryong)</name>
    <name type="common">Rickettsia tsutsugamushi</name>
    <dbReference type="NCBI Taxonomy" id="357244"/>
    <lineage>
        <taxon>Bacteria</taxon>
        <taxon>Pseudomonadati</taxon>
        <taxon>Pseudomonadota</taxon>
        <taxon>Alphaproteobacteria</taxon>
        <taxon>Rickettsiales</taxon>
        <taxon>Rickettsiaceae</taxon>
        <taxon>Rickettsieae</taxon>
        <taxon>Orientia</taxon>
    </lineage>
</organism>
<dbReference type="EC" id="1.18.1.2" evidence="1"/>
<dbReference type="EMBL" id="AM494475">
    <property type="protein sequence ID" value="CAM80936.1"/>
    <property type="molecule type" value="Genomic_DNA"/>
</dbReference>
<dbReference type="RefSeq" id="WP_011945073.1">
    <property type="nucleotide sequence ID" value="NC_009488.1"/>
</dbReference>
<dbReference type="SMR" id="A5CF57"/>
<dbReference type="KEGG" id="ots:OTBS_1841"/>
<dbReference type="eggNOG" id="COG0492">
    <property type="taxonomic scope" value="Bacteria"/>
</dbReference>
<dbReference type="HOGENOM" id="CLU_031864_5_5_5"/>
<dbReference type="Proteomes" id="UP000001565">
    <property type="component" value="Chromosome"/>
</dbReference>
<dbReference type="GO" id="GO:0004324">
    <property type="term" value="F:ferredoxin-NADP+ reductase activity"/>
    <property type="evidence" value="ECO:0007669"/>
    <property type="project" value="UniProtKB-UniRule"/>
</dbReference>
<dbReference type="GO" id="GO:0050660">
    <property type="term" value="F:flavin adenine dinucleotide binding"/>
    <property type="evidence" value="ECO:0007669"/>
    <property type="project" value="UniProtKB-UniRule"/>
</dbReference>
<dbReference type="GO" id="GO:0050661">
    <property type="term" value="F:NADP binding"/>
    <property type="evidence" value="ECO:0007669"/>
    <property type="project" value="UniProtKB-UniRule"/>
</dbReference>
<dbReference type="Gene3D" id="3.50.50.60">
    <property type="entry name" value="FAD/NAD(P)-binding domain"/>
    <property type="match status" value="2"/>
</dbReference>
<dbReference type="HAMAP" id="MF_01685">
    <property type="entry name" value="FENR2"/>
    <property type="match status" value="1"/>
</dbReference>
<dbReference type="InterPro" id="IPR036188">
    <property type="entry name" value="FAD/NAD-bd_sf"/>
</dbReference>
<dbReference type="InterPro" id="IPR023753">
    <property type="entry name" value="FAD/NAD-binding_dom"/>
</dbReference>
<dbReference type="InterPro" id="IPR022890">
    <property type="entry name" value="Fd--NADP_Rdtase_type_2"/>
</dbReference>
<dbReference type="InterPro" id="IPR050097">
    <property type="entry name" value="Ferredoxin-NADP_redctase_2"/>
</dbReference>
<dbReference type="PANTHER" id="PTHR48105">
    <property type="entry name" value="THIOREDOXIN REDUCTASE 1-RELATED-RELATED"/>
    <property type="match status" value="1"/>
</dbReference>
<dbReference type="Pfam" id="PF07992">
    <property type="entry name" value="Pyr_redox_2"/>
    <property type="match status" value="1"/>
</dbReference>
<dbReference type="PRINTS" id="PR00368">
    <property type="entry name" value="FADPNR"/>
</dbReference>
<dbReference type="PRINTS" id="PR00469">
    <property type="entry name" value="PNDRDTASEII"/>
</dbReference>
<dbReference type="SUPFAM" id="SSF51905">
    <property type="entry name" value="FAD/NAD(P)-binding domain"/>
    <property type="match status" value="2"/>
</dbReference>
<feature type="chain" id="PRO_0000364891" description="Ferredoxin--NADP reductase">
    <location>
        <begin position="1"/>
        <end position="338"/>
    </location>
</feature>
<feature type="binding site" evidence="1">
    <location>
        <position position="38"/>
    </location>
    <ligand>
        <name>FAD</name>
        <dbReference type="ChEBI" id="CHEBI:57692"/>
    </ligand>
</feature>
<feature type="binding site" evidence="1">
    <location>
        <position position="46"/>
    </location>
    <ligand>
        <name>FAD</name>
        <dbReference type="ChEBI" id="CHEBI:57692"/>
    </ligand>
</feature>
<feature type="binding site" evidence="1">
    <location>
        <position position="51"/>
    </location>
    <ligand>
        <name>FAD</name>
        <dbReference type="ChEBI" id="CHEBI:57692"/>
    </ligand>
</feature>
<feature type="binding site" evidence="1">
    <location>
        <position position="91"/>
    </location>
    <ligand>
        <name>FAD</name>
        <dbReference type="ChEBI" id="CHEBI:57692"/>
    </ligand>
</feature>
<feature type="binding site" evidence="1">
    <location>
        <position position="125"/>
    </location>
    <ligand>
        <name>FAD</name>
        <dbReference type="ChEBI" id="CHEBI:57692"/>
    </ligand>
</feature>
<feature type="binding site" evidence="1">
    <location>
        <position position="291"/>
    </location>
    <ligand>
        <name>FAD</name>
        <dbReference type="ChEBI" id="CHEBI:57692"/>
    </ligand>
</feature>
<feature type="binding site" evidence="1">
    <location>
        <position position="331"/>
    </location>
    <ligand>
        <name>FAD</name>
        <dbReference type="ChEBI" id="CHEBI:57692"/>
    </ligand>
</feature>
<keyword id="KW-0274">FAD</keyword>
<keyword id="KW-0285">Flavoprotein</keyword>
<keyword id="KW-0521">NADP</keyword>
<keyword id="KW-0560">Oxidoreductase</keyword>
<keyword id="KW-1185">Reference proteome</keyword>
<gene>
    <name type="ordered locus">OTBS_1841</name>
</gene>
<protein>
    <recommendedName>
        <fullName evidence="1">Ferredoxin--NADP reductase</fullName>
        <shortName evidence="1">FNR</shortName>
        <shortName evidence="1">Fd-NADP(+) reductase</shortName>
        <ecNumber evidence="1">1.18.1.2</ecNumber>
    </recommendedName>
</protein>
<evidence type="ECO:0000255" key="1">
    <source>
        <dbReference type="HAMAP-Rule" id="MF_01685"/>
    </source>
</evidence>
<sequence>MLSKNVHTADVVIVGAGPVGLFAVFQAGMLEMKCHVVDALDCIGGQCVTLYPDKPIYDIPAYPVITAAKLIEQLKQQVAPFDTVYHLGQQVIGCKIDNDIITITTSAEQVICSKSLIIAAGCGAFKYKRLILDNIEAFENKTVFYSVKDKNKFINKKVVIAGGGDSAIDWTLLLSDVAEVIYLVHRRENFRCAPHSLNQIKQLAEYGKVQMIVPYQLAKLTGENGLLQEVLVTNFNGGTQTLPADYLLAFFGLAADLGPIHKWGLKTDLRRIEVNSITYETTIPGIYAIGDVASYPGKLKLILTGFAEAATAMSHCYQRVFGKKMHFQYSTVKGVLRS</sequence>
<name>FENR_ORITB</name>